<feature type="chain" id="PRO_1000147188" description="Protein TusB">
    <location>
        <begin position="1"/>
        <end position="95"/>
    </location>
</feature>
<comment type="function">
    <text evidence="1">Part of a sulfur-relay system required for 2-thiolation of 5-methylaminomethyl-2-thiouridine (mnm(5)s(2)U) at tRNA wobble positions.</text>
</comment>
<comment type="subunit">
    <text evidence="1">Heterohexamer, formed by a dimer of trimers. The hexameric TusBCD complex contains 2 copies each of TusB, TusC and TusD. The TusBCD complex interacts with TusE.</text>
</comment>
<comment type="subcellular location">
    <subcellularLocation>
        <location evidence="1">Cytoplasm</location>
    </subcellularLocation>
</comment>
<comment type="similarity">
    <text evidence="1">Belongs to the DsrH/TusB family.</text>
</comment>
<protein>
    <recommendedName>
        <fullName evidence="1">Protein TusB</fullName>
    </recommendedName>
    <alternativeName>
        <fullName evidence="1">tRNA 2-thiouridine synthesizing protein B</fullName>
    </alternativeName>
</protein>
<sequence length="95" mass="10518">MLHTLPHCASSVDFPALLRLLKEGDALLLLQDGVTVAIEGNRFLESLRDAPITVYALKEDIDARGLGGQISDSVVRVDYTDFVRLTVKYANQMAW</sequence>
<accession>B5R2A0</accession>
<evidence type="ECO:0000255" key="1">
    <source>
        <dbReference type="HAMAP-Rule" id="MF_01564"/>
    </source>
</evidence>
<keyword id="KW-0963">Cytoplasm</keyword>
<keyword id="KW-0819">tRNA processing</keyword>
<organism>
    <name type="scientific">Salmonella enteritidis PT4 (strain P125109)</name>
    <dbReference type="NCBI Taxonomy" id="550537"/>
    <lineage>
        <taxon>Bacteria</taxon>
        <taxon>Pseudomonadati</taxon>
        <taxon>Pseudomonadota</taxon>
        <taxon>Gammaproteobacteria</taxon>
        <taxon>Enterobacterales</taxon>
        <taxon>Enterobacteriaceae</taxon>
        <taxon>Salmonella</taxon>
    </lineage>
</organism>
<name>TUSB_SALEP</name>
<reference key="1">
    <citation type="journal article" date="2008" name="Genome Res.">
        <title>Comparative genome analysis of Salmonella enteritidis PT4 and Salmonella gallinarum 287/91 provides insights into evolutionary and host adaptation pathways.</title>
        <authorList>
            <person name="Thomson N.R."/>
            <person name="Clayton D.J."/>
            <person name="Windhorst D."/>
            <person name="Vernikos G."/>
            <person name="Davidson S."/>
            <person name="Churcher C."/>
            <person name="Quail M.A."/>
            <person name="Stevens M."/>
            <person name="Jones M.A."/>
            <person name="Watson M."/>
            <person name="Barron A."/>
            <person name="Layton A."/>
            <person name="Pickard D."/>
            <person name="Kingsley R.A."/>
            <person name="Bignell A."/>
            <person name="Clark L."/>
            <person name="Harris B."/>
            <person name="Ormond D."/>
            <person name="Abdellah Z."/>
            <person name="Brooks K."/>
            <person name="Cherevach I."/>
            <person name="Chillingworth T."/>
            <person name="Woodward J."/>
            <person name="Norberczak H."/>
            <person name="Lord A."/>
            <person name="Arrowsmith C."/>
            <person name="Jagels K."/>
            <person name="Moule S."/>
            <person name="Mungall K."/>
            <person name="Saunders M."/>
            <person name="Whitehead S."/>
            <person name="Chabalgoity J.A."/>
            <person name="Maskell D."/>
            <person name="Humphreys T."/>
            <person name="Roberts M."/>
            <person name="Barrow P.A."/>
            <person name="Dougan G."/>
            <person name="Parkhill J."/>
        </authorList>
    </citation>
    <scope>NUCLEOTIDE SEQUENCE [LARGE SCALE GENOMIC DNA]</scope>
    <source>
        <strain>P125109</strain>
    </source>
</reference>
<dbReference type="EMBL" id="AM933172">
    <property type="protein sequence ID" value="CAR34852.1"/>
    <property type="molecule type" value="Genomic_DNA"/>
</dbReference>
<dbReference type="RefSeq" id="WP_000903399.1">
    <property type="nucleotide sequence ID" value="NC_011294.1"/>
</dbReference>
<dbReference type="SMR" id="B5R2A0"/>
<dbReference type="KEGG" id="set:SEN3277"/>
<dbReference type="HOGENOM" id="CLU_166087_2_1_6"/>
<dbReference type="Proteomes" id="UP000000613">
    <property type="component" value="Chromosome"/>
</dbReference>
<dbReference type="GO" id="GO:1990228">
    <property type="term" value="C:sulfurtransferase complex"/>
    <property type="evidence" value="ECO:0007669"/>
    <property type="project" value="TreeGrafter"/>
</dbReference>
<dbReference type="GO" id="GO:0002143">
    <property type="term" value="P:tRNA wobble position uridine thiolation"/>
    <property type="evidence" value="ECO:0007669"/>
    <property type="project" value="InterPro"/>
</dbReference>
<dbReference type="FunFam" id="3.40.1260.10:FF:000002">
    <property type="entry name" value="Sulfurtransferase TusB"/>
    <property type="match status" value="1"/>
</dbReference>
<dbReference type="Gene3D" id="3.40.1260.10">
    <property type="entry name" value="DsrEFH-like"/>
    <property type="match status" value="1"/>
</dbReference>
<dbReference type="HAMAP" id="MF_01564">
    <property type="entry name" value="Thiourid_synth_B"/>
    <property type="match status" value="1"/>
</dbReference>
<dbReference type="InterPro" id="IPR027396">
    <property type="entry name" value="DsrEFH-like"/>
</dbReference>
<dbReference type="InterPro" id="IPR023526">
    <property type="entry name" value="Sulphur_relay_TusB"/>
</dbReference>
<dbReference type="InterPro" id="IPR007215">
    <property type="entry name" value="Sulphur_relay_TusB/DsrH"/>
</dbReference>
<dbReference type="NCBIfam" id="NF010035">
    <property type="entry name" value="PRK13510.1"/>
    <property type="match status" value="1"/>
</dbReference>
<dbReference type="NCBIfam" id="TIGR03011">
    <property type="entry name" value="sulf_tusB_dsrH"/>
    <property type="match status" value="1"/>
</dbReference>
<dbReference type="PANTHER" id="PTHR37526">
    <property type="entry name" value="PROTEIN TUSB"/>
    <property type="match status" value="1"/>
</dbReference>
<dbReference type="PANTHER" id="PTHR37526:SF1">
    <property type="entry name" value="PROTEIN TUSB"/>
    <property type="match status" value="1"/>
</dbReference>
<dbReference type="Pfam" id="PF04077">
    <property type="entry name" value="DsrH"/>
    <property type="match status" value="1"/>
</dbReference>
<dbReference type="SUPFAM" id="SSF75169">
    <property type="entry name" value="DsrEFH-like"/>
    <property type="match status" value="1"/>
</dbReference>
<gene>
    <name evidence="1" type="primary">tusB</name>
    <name type="ordered locus">SEN3277</name>
</gene>
<proteinExistence type="inferred from homology"/>